<evidence type="ECO:0000255" key="1"/>
<evidence type="ECO:0000305" key="2"/>
<keyword id="KW-1003">Cell membrane</keyword>
<keyword id="KW-0472">Membrane</keyword>
<keyword id="KW-1185">Reference proteome</keyword>
<keyword id="KW-0812">Transmembrane</keyword>
<keyword id="KW-1133">Transmembrane helix</keyword>
<proteinExistence type="predicted"/>
<feature type="chain" id="PRO_0000128005" description="Uncharacterized protein AF_1460">
    <location>
        <begin position="1"/>
        <end position="227"/>
    </location>
</feature>
<feature type="transmembrane region" description="Helical" evidence="1">
    <location>
        <begin position="15"/>
        <end position="34"/>
    </location>
</feature>
<feature type="transmembrane region" description="Helical" evidence="1">
    <location>
        <begin position="55"/>
        <end position="77"/>
    </location>
</feature>
<feature type="transmembrane region" description="Helical" evidence="1">
    <location>
        <begin position="92"/>
        <end position="114"/>
    </location>
</feature>
<feature type="transmembrane region" description="Helical" evidence="1">
    <location>
        <begin position="121"/>
        <end position="140"/>
    </location>
</feature>
<feature type="transmembrane region" description="Helical" evidence="1">
    <location>
        <begin position="145"/>
        <end position="167"/>
    </location>
</feature>
<feature type="transmembrane region" description="Helical" evidence="1">
    <location>
        <begin position="180"/>
        <end position="202"/>
    </location>
</feature>
<feature type="transmembrane region" description="Helical" evidence="1">
    <location>
        <begin position="206"/>
        <end position="224"/>
    </location>
</feature>
<accession>O28812</accession>
<gene>
    <name type="ordered locus">AF_1460</name>
</gene>
<name>Y1460_ARCFU</name>
<sequence>MPPPMIPPKLPPLEFIAAEALYSSIIFLICFLIYHRLREVYKLSDYRGFHFFSNTFLFLGLAYFLRFVVLLLSASGVMFEEISLEGLRGIMAFSMAFLAYSGSAAILYTIYSLLWRWLERFPGEVVINGVALVIALTSLLSRMPLVFLISQLALVFLLVAAIFVNYSHFRHESRSKRAYPLYILLFVFWLLNISLTFRFLPLEFRFAIYTLSVAVILIIAYRVLRKL</sequence>
<organism>
    <name type="scientific">Archaeoglobus fulgidus (strain ATCC 49558 / DSM 4304 / JCM 9628 / NBRC 100126 / VC-16)</name>
    <dbReference type="NCBI Taxonomy" id="224325"/>
    <lineage>
        <taxon>Archaea</taxon>
        <taxon>Methanobacteriati</taxon>
        <taxon>Methanobacteriota</taxon>
        <taxon>Archaeoglobi</taxon>
        <taxon>Archaeoglobales</taxon>
        <taxon>Archaeoglobaceae</taxon>
        <taxon>Archaeoglobus</taxon>
    </lineage>
</organism>
<reference key="1">
    <citation type="journal article" date="1997" name="Nature">
        <title>The complete genome sequence of the hyperthermophilic, sulphate-reducing archaeon Archaeoglobus fulgidus.</title>
        <authorList>
            <person name="Klenk H.-P."/>
            <person name="Clayton R.A."/>
            <person name="Tomb J.-F."/>
            <person name="White O."/>
            <person name="Nelson K.E."/>
            <person name="Ketchum K.A."/>
            <person name="Dodson R.J."/>
            <person name="Gwinn M.L."/>
            <person name="Hickey E.K."/>
            <person name="Peterson J.D."/>
            <person name="Richardson D.L."/>
            <person name="Kerlavage A.R."/>
            <person name="Graham D.E."/>
            <person name="Kyrpides N.C."/>
            <person name="Fleischmann R.D."/>
            <person name="Quackenbush J."/>
            <person name="Lee N.H."/>
            <person name="Sutton G.G."/>
            <person name="Gill S.R."/>
            <person name="Kirkness E.F."/>
            <person name="Dougherty B.A."/>
            <person name="McKenney K."/>
            <person name="Adams M.D."/>
            <person name="Loftus B.J."/>
            <person name="Peterson S.N."/>
            <person name="Reich C.I."/>
            <person name="McNeil L.K."/>
            <person name="Badger J.H."/>
            <person name="Glodek A."/>
            <person name="Zhou L."/>
            <person name="Overbeek R."/>
            <person name="Gocayne J.D."/>
            <person name="Weidman J.F."/>
            <person name="McDonald L.A."/>
            <person name="Utterback T.R."/>
            <person name="Cotton M.D."/>
            <person name="Spriggs T."/>
            <person name="Artiach P."/>
            <person name="Kaine B.P."/>
            <person name="Sykes S.M."/>
            <person name="Sadow P.W."/>
            <person name="D'Andrea K.P."/>
            <person name="Bowman C."/>
            <person name="Fujii C."/>
            <person name="Garland S.A."/>
            <person name="Mason T.M."/>
            <person name="Olsen G.J."/>
            <person name="Fraser C.M."/>
            <person name="Smith H.O."/>
            <person name="Woese C.R."/>
            <person name="Venter J.C."/>
        </authorList>
    </citation>
    <scope>NUCLEOTIDE SEQUENCE [LARGE SCALE GENOMIC DNA]</scope>
    <source>
        <strain>ATCC 49558 / DSM 4304 / JCM 9628 / NBRC 100126 / VC-16</strain>
    </source>
</reference>
<comment type="subcellular location">
    <subcellularLocation>
        <location evidence="2">Cell membrane</location>
        <topology evidence="2">Multi-pass membrane protein</topology>
    </subcellularLocation>
</comment>
<dbReference type="EMBL" id="AE000782">
    <property type="protein sequence ID" value="AAB89791.1"/>
    <property type="molecule type" value="Genomic_DNA"/>
</dbReference>
<dbReference type="PIR" id="C69432">
    <property type="entry name" value="C69432"/>
</dbReference>
<dbReference type="STRING" id="224325.AF_1460"/>
<dbReference type="PaxDb" id="224325-AF_1460"/>
<dbReference type="EnsemblBacteria" id="AAB89791">
    <property type="protein sequence ID" value="AAB89791"/>
    <property type="gene ID" value="AF_1460"/>
</dbReference>
<dbReference type="KEGG" id="afu:AF_1460"/>
<dbReference type="HOGENOM" id="CLU_1217518_0_0_2"/>
<dbReference type="Proteomes" id="UP000002199">
    <property type="component" value="Chromosome"/>
</dbReference>
<dbReference type="GO" id="GO:0005886">
    <property type="term" value="C:plasma membrane"/>
    <property type="evidence" value="ECO:0007669"/>
    <property type="project" value="UniProtKB-SubCell"/>
</dbReference>
<protein>
    <recommendedName>
        <fullName>Uncharacterized protein AF_1460</fullName>
    </recommendedName>
</protein>